<dbReference type="EMBL" id="U55769">
    <property type="protein sequence ID" value="AAA99815.1"/>
    <property type="molecule type" value="mRNA"/>
</dbReference>
<dbReference type="SMR" id="Q94757"/>
<dbReference type="FunCoup" id="Q94757">
    <property type="interactions" value="2185"/>
</dbReference>
<dbReference type="STRING" id="6183.Q94757"/>
<dbReference type="eggNOG" id="KOG0360">
    <property type="taxonomic scope" value="Eukaryota"/>
</dbReference>
<dbReference type="HOGENOM" id="CLU_008891_5_1_1"/>
<dbReference type="InParanoid" id="Q94757"/>
<dbReference type="Proteomes" id="UP000008854">
    <property type="component" value="Unassembled WGS sequence"/>
</dbReference>
<dbReference type="GO" id="GO:0005737">
    <property type="term" value="C:cytoplasm"/>
    <property type="evidence" value="ECO:0007669"/>
    <property type="project" value="UniProtKB-SubCell"/>
</dbReference>
<dbReference type="GO" id="GO:0005524">
    <property type="term" value="F:ATP binding"/>
    <property type="evidence" value="ECO:0007669"/>
    <property type="project" value="UniProtKB-KW"/>
</dbReference>
<dbReference type="GO" id="GO:0016887">
    <property type="term" value="F:ATP hydrolysis activity"/>
    <property type="evidence" value="ECO:0007669"/>
    <property type="project" value="InterPro"/>
</dbReference>
<dbReference type="GO" id="GO:0140662">
    <property type="term" value="F:ATP-dependent protein folding chaperone"/>
    <property type="evidence" value="ECO:0007669"/>
    <property type="project" value="InterPro"/>
</dbReference>
<dbReference type="GO" id="GO:0051082">
    <property type="term" value="F:unfolded protein binding"/>
    <property type="evidence" value="ECO:0007669"/>
    <property type="project" value="InterPro"/>
</dbReference>
<dbReference type="CDD" id="cd03335">
    <property type="entry name" value="TCP1_alpha"/>
    <property type="match status" value="1"/>
</dbReference>
<dbReference type="FunFam" id="3.50.7.10:FF:000009">
    <property type="entry name" value="T-complex protein 1 subunit alpha"/>
    <property type="match status" value="1"/>
</dbReference>
<dbReference type="FunFam" id="1.10.560.10:FF:000070">
    <property type="entry name" value="Uncharacterized protein"/>
    <property type="match status" value="1"/>
</dbReference>
<dbReference type="Gene3D" id="3.50.7.10">
    <property type="entry name" value="GroEL"/>
    <property type="match status" value="1"/>
</dbReference>
<dbReference type="Gene3D" id="1.10.560.10">
    <property type="entry name" value="GroEL-like equatorial domain"/>
    <property type="match status" value="1"/>
</dbReference>
<dbReference type="Gene3D" id="3.30.260.10">
    <property type="entry name" value="TCP-1-like chaperonin intermediate domain"/>
    <property type="match status" value="1"/>
</dbReference>
<dbReference type="InterPro" id="IPR012715">
    <property type="entry name" value="Chap_CCT_alpha"/>
</dbReference>
<dbReference type="InterPro" id="IPR017998">
    <property type="entry name" value="Chaperone_TCP-1"/>
</dbReference>
<dbReference type="InterPro" id="IPR002194">
    <property type="entry name" value="Chaperonin_TCP-1_CS"/>
</dbReference>
<dbReference type="InterPro" id="IPR002423">
    <property type="entry name" value="Cpn60/GroEL/TCP-1"/>
</dbReference>
<dbReference type="InterPro" id="IPR027409">
    <property type="entry name" value="GroEL-like_apical_dom_sf"/>
</dbReference>
<dbReference type="InterPro" id="IPR027413">
    <property type="entry name" value="GROEL-like_equatorial_sf"/>
</dbReference>
<dbReference type="InterPro" id="IPR027410">
    <property type="entry name" value="TCP-1-like_intermed_sf"/>
</dbReference>
<dbReference type="InterPro" id="IPR053374">
    <property type="entry name" value="TCP-1_chaperonin"/>
</dbReference>
<dbReference type="InterPro" id="IPR054827">
    <property type="entry name" value="thermosome_alpha"/>
</dbReference>
<dbReference type="NCBIfam" id="TIGR02340">
    <property type="entry name" value="chap_CCT_alpha"/>
    <property type="match status" value="1"/>
</dbReference>
<dbReference type="NCBIfam" id="NF041082">
    <property type="entry name" value="thermosome_alpha"/>
    <property type="match status" value="1"/>
</dbReference>
<dbReference type="NCBIfam" id="NF041083">
    <property type="entry name" value="thermosome_beta"/>
    <property type="match status" value="1"/>
</dbReference>
<dbReference type="PANTHER" id="PTHR11353">
    <property type="entry name" value="CHAPERONIN"/>
    <property type="match status" value="1"/>
</dbReference>
<dbReference type="Pfam" id="PF00118">
    <property type="entry name" value="Cpn60_TCP1"/>
    <property type="match status" value="1"/>
</dbReference>
<dbReference type="PRINTS" id="PR00304">
    <property type="entry name" value="TCOMPLEXTCP1"/>
</dbReference>
<dbReference type="SUPFAM" id="SSF52029">
    <property type="entry name" value="GroEL apical domain-like"/>
    <property type="match status" value="1"/>
</dbReference>
<dbReference type="SUPFAM" id="SSF48592">
    <property type="entry name" value="GroEL equatorial domain-like"/>
    <property type="match status" value="1"/>
</dbReference>
<dbReference type="SUPFAM" id="SSF54849">
    <property type="entry name" value="GroEL-intermediate domain like"/>
    <property type="match status" value="1"/>
</dbReference>
<dbReference type="PROSITE" id="PS00750">
    <property type="entry name" value="TCP1_1"/>
    <property type="match status" value="1"/>
</dbReference>
<dbReference type="PROSITE" id="PS00751">
    <property type="entry name" value="TCP1_2"/>
    <property type="match status" value="1"/>
</dbReference>
<dbReference type="PROSITE" id="PS00995">
    <property type="entry name" value="TCP1_3"/>
    <property type="match status" value="1"/>
</dbReference>
<proteinExistence type="evidence at transcript level"/>
<comment type="function">
    <text evidence="1">Molecular chaperone; assists the folding of proteins upon ATP hydrolysis. Known to play a role, in vitro, in the folding of actin and tubulin (By similarity).</text>
</comment>
<comment type="subunit">
    <text>Heterooligomeric complex of about 850 to 900 kDa that forms two stacked rings, 12 to 16 nm in diameter.</text>
</comment>
<comment type="subcellular location">
    <subcellularLocation>
        <location>Cytoplasm</location>
    </subcellularLocation>
</comment>
<comment type="similarity">
    <text evidence="2">Belongs to the TCP-1 chaperonin family.</text>
</comment>
<reference key="1">
    <citation type="submission" date="1996-08" db="EMBL/GenBank/DDBJ databases">
        <authorList>
            <person name="Campos E.G."/>
            <person name="Hamdan F.F."/>
            <person name="Ribeiro P."/>
            <person name="Prichard R.K."/>
        </authorList>
    </citation>
    <scope>NUCLEOTIDE SEQUENCE [MRNA]</scope>
    <source>
        <strain>Egyptian</strain>
    </source>
</reference>
<accession>Q94757</accession>
<protein>
    <recommendedName>
        <fullName>T-complex protein 1 subunit alpha</fullName>
        <shortName>TCP-1-alpha</shortName>
    </recommendedName>
    <alternativeName>
        <fullName>CCT-alpha</fullName>
    </alternativeName>
</protein>
<sequence>MLTLGGERTSGESVRKQNVLAACSFANFVKTSLGPVGLDKMLVDDVGDVTITNDGATILKLLDVEHPAAKILVQLAQLQDEEVGDGTTSVVILAAALLKNADELISRFVHPTTVINGYRLACREACKYIQEHMAYDVNKLGKAGLINVARTAMSSKLINLDADMFSQMAVDALMAVEVSGGPKGPVYPIKAVNILKAHGRSMSESMLIDGYALNCTAASQQMPRIIKKAKIAFLDFSLQKVKMKLGVQVVVKDPAQLEAIRQREADITKERIQKILNAGANVILTTGGIDDLCMKYFVEVNAMAVRRCKKVDLKNMAKATGGQLIVSLADMEGDEVFDPTKLGNAEEVSQERICDDELIILRGPKVHPSASIILRGANDFYVDEMERSLHDALLVVKRVLESKRIVPGAGACETAVSIYLENYALTLSSREQLAIAEFARAMLSIPKQLAVNAGVDSTELVARLRSCHNSSQSKPDQAHNKWWGLDLNNQYVADCKEIGVFEPLVSKIKSLKFATEAAITILRIDDLIKLKEEKQPDHDGDECGY</sequence>
<evidence type="ECO:0000250" key="1"/>
<evidence type="ECO:0000305" key="2"/>
<organism>
    <name type="scientific">Schistosoma mansoni</name>
    <name type="common">Blood fluke</name>
    <dbReference type="NCBI Taxonomy" id="6183"/>
    <lineage>
        <taxon>Eukaryota</taxon>
        <taxon>Metazoa</taxon>
        <taxon>Spiralia</taxon>
        <taxon>Lophotrochozoa</taxon>
        <taxon>Platyhelminthes</taxon>
        <taxon>Trematoda</taxon>
        <taxon>Digenea</taxon>
        <taxon>Strigeidida</taxon>
        <taxon>Schistosomatoidea</taxon>
        <taxon>Schistosomatidae</taxon>
        <taxon>Schistosoma</taxon>
    </lineage>
</organism>
<gene>
    <name type="primary">TCP-1A</name>
</gene>
<name>TCPA_SCHMA</name>
<feature type="chain" id="PRO_0000128311" description="T-complex protein 1 subunit alpha">
    <location>
        <begin position="1"/>
        <end position="545"/>
    </location>
</feature>
<keyword id="KW-0067">ATP-binding</keyword>
<keyword id="KW-0143">Chaperone</keyword>
<keyword id="KW-0963">Cytoplasm</keyword>
<keyword id="KW-0547">Nucleotide-binding</keyword>
<keyword id="KW-1185">Reference proteome</keyword>